<accession>A0JYN1</accession>
<name>DCUP_ARTS2</name>
<evidence type="ECO:0000255" key="1">
    <source>
        <dbReference type="HAMAP-Rule" id="MF_00218"/>
    </source>
</evidence>
<feature type="chain" id="PRO_0000325624" description="Uroporphyrinogen decarboxylase">
    <location>
        <begin position="1"/>
        <end position="345"/>
    </location>
</feature>
<feature type="binding site" evidence="1">
    <location>
        <begin position="28"/>
        <end position="32"/>
    </location>
    <ligand>
        <name>substrate</name>
    </ligand>
</feature>
<feature type="binding site" evidence="1">
    <location>
        <position position="77"/>
    </location>
    <ligand>
        <name>substrate</name>
    </ligand>
</feature>
<feature type="binding site" evidence="1">
    <location>
        <position position="152"/>
    </location>
    <ligand>
        <name>substrate</name>
    </ligand>
</feature>
<feature type="binding site" evidence="1">
    <location>
        <position position="207"/>
    </location>
    <ligand>
        <name>substrate</name>
    </ligand>
</feature>
<feature type="binding site" evidence="1">
    <location>
        <position position="321"/>
    </location>
    <ligand>
        <name>substrate</name>
    </ligand>
</feature>
<feature type="site" description="Transition state stabilizer" evidence="1">
    <location>
        <position position="77"/>
    </location>
</feature>
<proteinExistence type="inferred from homology"/>
<organism>
    <name type="scientific">Arthrobacter sp. (strain FB24)</name>
    <dbReference type="NCBI Taxonomy" id="290399"/>
    <lineage>
        <taxon>Bacteria</taxon>
        <taxon>Bacillati</taxon>
        <taxon>Actinomycetota</taxon>
        <taxon>Actinomycetes</taxon>
        <taxon>Micrococcales</taxon>
        <taxon>Micrococcaceae</taxon>
        <taxon>Arthrobacter</taxon>
    </lineage>
</organism>
<reference key="1">
    <citation type="journal article" date="2013" name="Stand. Genomic Sci.">
        <title>Complete genome sequence of Arthrobacter sp. strain FB24.</title>
        <authorList>
            <person name="Nakatsu C.H."/>
            <person name="Barabote R."/>
            <person name="Thompson S."/>
            <person name="Bruce D."/>
            <person name="Detter C."/>
            <person name="Brettin T."/>
            <person name="Han C."/>
            <person name="Beasley F."/>
            <person name="Chen W."/>
            <person name="Konopka A."/>
            <person name="Xie G."/>
        </authorList>
    </citation>
    <scope>NUCLEOTIDE SEQUENCE [LARGE SCALE GENOMIC DNA]</scope>
    <source>
        <strain>FB24</strain>
    </source>
</reference>
<comment type="function">
    <text evidence="1">Catalyzes the decarboxylation of four acetate groups of uroporphyrinogen-III to yield coproporphyrinogen-III.</text>
</comment>
<comment type="catalytic activity">
    <reaction evidence="1">
        <text>uroporphyrinogen III + 4 H(+) = coproporphyrinogen III + 4 CO2</text>
        <dbReference type="Rhea" id="RHEA:19865"/>
        <dbReference type="ChEBI" id="CHEBI:15378"/>
        <dbReference type="ChEBI" id="CHEBI:16526"/>
        <dbReference type="ChEBI" id="CHEBI:57308"/>
        <dbReference type="ChEBI" id="CHEBI:57309"/>
        <dbReference type="EC" id="4.1.1.37"/>
    </reaction>
</comment>
<comment type="pathway">
    <text evidence="1">Porphyrin-containing compound metabolism; protoporphyrin-IX biosynthesis; coproporphyrinogen-III from 5-aminolevulinate: step 4/4.</text>
</comment>
<comment type="subunit">
    <text evidence="1">Homodimer.</text>
</comment>
<comment type="subcellular location">
    <subcellularLocation>
        <location evidence="1">Cytoplasm</location>
    </subcellularLocation>
</comment>
<comment type="similarity">
    <text evidence="1">Belongs to the uroporphyrinogen decarboxylase family.</text>
</comment>
<protein>
    <recommendedName>
        <fullName evidence="1">Uroporphyrinogen decarboxylase</fullName>
        <shortName evidence="1">UPD</shortName>
        <shortName evidence="1">URO-D</shortName>
        <ecNumber evidence="1">4.1.1.37</ecNumber>
    </recommendedName>
</protein>
<sequence length="345" mass="37025">MDGRTADSPLITAYRGGKPTRRPVWFMRQAGRSLPEYLKVREGVAMLDSCLRPELASEITLQPVRRHDVDAAIFFSDIVIPLKLAGVGVDIVPGVGPVLDKPVRTAEDVAALPQLTWEALEPIREAVRLTVAQLGKTPLIGFAGAPFTLAAYMVEGKPSRDHLGPRTMMHADPETWNALANWAADASGMFLRAQLEAGASAGQLFDSWAGSLGLADYKRFVAPASARALDHVRHLGAPLIHFGTGTSELLVAMRDVGVDVVGVDYRLPLDEANRRLGGTVPLQGNIDPALLSAPWAVLEAHVREVIKAGSFAPGHVLNLGHGVPPETDPDVLTRVVELIHSISPE</sequence>
<keyword id="KW-0963">Cytoplasm</keyword>
<keyword id="KW-0210">Decarboxylase</keyword>
<keyword id="KW-0456">Lyase</keyword>
<keyword id="KW-0627">Porphyrin biosynthesis</keyword>
<keyword id="KW-1185">Reference proteome</keyword>
<gene>
    <name evidence="1" type="primary">hemE</name>
    <name type="ordered locus">Arth_2772</name>
</gene>
<dbReference type="EC" id="4.1.1.37" evidence="1"/>
<dbReference type="EMBL" id="CP000454">
    <property type="protein sequence ID" value="ABK04151.1"/>
    <property type="molecule type" value="Genomic_DNA"/>
</dbReference>
<dbReference type="SMR" id="A0JYN1"/>
<dbReference type="STRING" id="290399.Arth_2772"/>
<dbReference type="KEGG" id="art:Arth_2772"/>
<dbReference type="eggNOG" id="COG0407">
    <property type="taxonomic scope" value="Bacteria"/>
</dbReference>
<dbReference type="HOGENOM" id="CLU_040933_0_1_11"/>
<dbReference type="UniPathway" id="UPA00251">
    <property type="reaction ID" value="UER00321"/>
</dbReference>
<dbReference type="Proteomes" id="UP000000754">
    <property type="component" value="Chromosome"/>
</dbReference>
<dbReference type="GO" id="GO:0005829">
    <property type="term" value="C:cytosol"/>
    <property type="evidence" value="ECO:0007669"/>
    <property type="project" value="TreeGrafter"/>
</dbReference>
<dbReference type="GO" id="GO:0004853">
    <property type="term" value="F:uroporphyrinogen decarboxylase activity"/>
    <property type="evidence" value="ECO:0007669"/>
    <property type="project" value="UniProtKB-UniRule"/>
</dbReference>
<dbReference type="GO" id="GO:0006782">
    <property type="term" value="P:protoporphyrinogen IX biosynthetic process"/>
    <property type="evidence" value="ECO:0007669"/>
    <property type="project" value="UniProtKB-UniRule"/>
</dbReference>
<dbReference type="CDD" id="cd00717">
    <property type="entry name" value="URO-D"/>
    <property type="match status" value="1"/>
</dbReference>
<dbReference type="Gene3D" id="3.20.20.210">
    <property type="match status" value="1"/>
</dbReference>
<dbReference type="HAMAP" id="MF_00218">
    <property type="entry name" value="URO_D"/>
    <property type="match status" value="1"/>
</dbReference>
<dbReference type="InterPro" id="IPR038071">
    <property type="entry name" value="UROD/MetE-like_sf"/>
</dbReference>
<dbReference type="InterPro" id="IPR006361">
    <property type="entry name" value="Uroporphyrinogen_deCO2ase_HemE"/>
</dbReference>
<dbReference type="InterPro" id="IPR000257">
    <property type="entry name" value="Uroporphyrinogen_deCOase"/>
</dbReference>
<dbReference type="NCBIfam" id="TIGR01464">
    <property type="entry name" value="hemE"/>
    <property type="match status" value="1"/>
</dbReference>
<dbReference type="PANTHER" id="PTHR21091">
    <property type="entry name" value="METHYLTETRAHYDROFOLATE:HOMOCYSTEINE METHYLTRANSFERASE RELATED"/>
    <property type="match status" value="1"/>
</dbReference>
<dbReference type="PANTHER" id="PTHR21091:SF169">
    <property type="entry name" value="UROPORPHYRINOGEN DECARBOXYLASE"/>
    <property type="match status" value="1"/>
</dbReference>
<dbReference type="Pfam" id="PF01208">
    <property type="entry name" value="URO-D"/>
    <property type="match status" value="1"/>
</dbReference>
<dbReference type="SUPFAM" id="SSF51726">
    <property type="entry name" value="UROD/MetE-like"/>
    <property type="match status" value="1"/>
</dbReference>
<dbReference type="PROSITE" id="PS00906">
    <property type="entry name" value="UROD_1"/>
    <property type="match status" value="1"/>
</dbReference>
<dbReference type="PROSITE" id="PS00907">
    <property type="entry name" value="UROD_2"/>
    <property type="match status" value="1"/>
</dbReference>